<protein>
    <recommendedName>
        <fullName evidence="1">ATP-dependent Clp protease proteolytic subunit</fullName>
        <ecNumber evidence="1">3.4.21.92</ecNumber>
    </recommendedName>
    <alternativeName>
        <fullName evidence="1">Endopeptidase Clp</fullName>
    </alternativeName>
</protein>
<sequence>MHNASDIQSALVPMVIEQTAKGERSYDIYSRLLKERIIFLVGQVEEHMANLIVAQLLFLESESPDKDIFLYINSPGGSVTAGMAIYDTMQFIKPNVSTVCIGQAASMGAFLLAGGEKGKRHCLPNSRVMIHQPLGGFQGQASDIAIHAKEILGIKNKLNQMLAEHTGQPLEVVERDTDRDNFMSATQAVEYGLVDSVMTKRG</sequence>
<feature type="chain" id="PRO_1000026125" description="ATP-dependent Clp protease proteolytic subunit">
    <location>
        <begin position="1"/>
        <end position="202"/>
    </location>
</feature>
<feature type="active site" description="Nucleophile" evidence="1">
    <location>
        <position position="106"/>
    </location>
</feature>
<feature type="active site" evidence="1">
    <location>
        <position position="131"/>
    </location>
</feature>
<keyword id="KW-0963">Cytoplasm</keyword>
<keyword id="KW-0378">Hydrolase</keyword>
<keyword id="KW-0645">Protease</keyword>
<keyword id="KW-1185">Reference proteome</keyword>
<keyword id="KW-0720">Serine protease</keyword>
<proteinExistence type="inferred from homology"/>
<dbReference type="EC" id="3.4.21.92" evidence="1"/>
<dbReference type="EMBL" id="CP000563">
    <property type="protein sequence ID" value="ABN61118.1"/>
    <property type="molecule type" value="Genomic_DNA"/>
</dbReference>
<dbReference type="RefSeq" id="WP_006081124.1">
    <property type="nucleotide sequence ID" value="NC_009052.1"/>
</dbReference>
<dbReference type="SMR" id="A3D305"/>
<dbReference type="STRING" id="325240.Sbal_1604"/>
<dbReference type="MEROPS" id="S14.001"/>
<dbReference type="GeneID" id="11771862"/>
<dbReference type="KEGG" id="sbl:Sbal_1604"/>
<dbReference type="HOGENOM" id="CLU_058707_3_2_6"/>
<dbReference type="OrthoDB" id="9802800at2"/>
<dbReference type="Proteomes" id="UP000001557">
    <property type="component" value="Chromosome"/>
</dbReference>
<dbReference type="GO" id="GO:0005737">
    <property type="term" value="C:cytoplasm"/>
    <property type="evidence" value="ECO:0007669"/>
    <property type="project" value="UniProtKB-SubCell"/>
</dbReference>
<dbReference type="GO" id="GO:0009368">
    <property type="term" value="C:endopeptidase Clp complex"/>
    <property type="evidence" value="ECO:0007669"/>
    <property type="project" value="TreeGrafter"/>
</dbReference>
<dbReference type="GO" id="GO:0004176">
    <property type="term" value="F:ATP-dependent peptidase activity"/>
    <property type="evidence" value="ECO:0007669"/>
    <property type="project" value="InterPro"/>
</dbReference>
<dbReference type="GO" id="GO:0051117">
    <property type="term" value="F:ATPase binding"/>
    <property type="evidence" value="ECO:0007669"/>
    <property type="project" value="TreeGrafter"/>
</dbReference>
<dbReference type="GO" id="GO:0004252">
    <property type="term" value="F:serine-type endopeptidase activity"/>
    <property type="evidence" value="ECO:0007669"/>
    <property type="project" value="UniProtKB-UniRule"/>
</dbReference>
<dbReference type="GO" id="GO:0006515">
    <property type="term" value="P:protein quality control for misfolded or incompletely synthesized proteins"/>
    <property type="evidence" value="ECO:0007669"/>
    <property type="project" value="TreeGrafter"/>
</dbReference>
<dbReference type="CDD" id="cd07017">
    <property type="entry name" value="S14_ClpP_2"/>
    <property type="match status" value="1"/>
</dbReference>
<dbReference type="FunFam" id="3.90.226.10:FF:000001">
    <property type="entry name" value="ATP-dependent Clp protease proteolytic subunit"/>
    <property type="match status" value="1"/>
</dbReference>
<dbReference type="Gene3D" id="3.90.226.10">
    <property type="entry name" value="2-enoyl-CoA Hydratase, Chain A, domain 1"/>
    <property type="match status" value="1"/>
</dbReference>
<dbReference type="HAMAP" id="MF_00444">
    <property type="entry name" value="ClpP"/>
    <property type="match status" value="1"/>
</dbReference>
<dbReference type="InterPro" id="IPR001907">
    <property type="entry name" value="ClpP"/>
</dbReference>
<dbReference type="InterPro" id="IPR029045">
    <property type="entry name" value="ClpP/crotonase-like_dom_sf"/>
</dbReference>
<dbReference type="InterPro" id="IPR023562">
    <property type="entry name" value="ClpP/TepA"/>
</dbReference>
<dbReference type="InterPro" id="IPR033135">
    <property type="entry name" value="ClpP_His_AS"/>
</dbReference>
<dbReference type="InterPro" id="IPR018215">
    <property type="entry name" value="ClpP_Ser_AS"/>
</dbReference>
<dbReference type="NCBIfam" id="TIGR00493">
    <property type="entry name" value="clpP"/>
    <property type="match status" value="1"/>
</dbReference>
<dbReference type="NCBIfam" id="NF001368">
    <property type="entry name" value="PRK00277.1"/>
    <property type="match status" value="1"/>
</dbReference>
<dbReference type="NCBIfam" id="NF009205">
    <property type="entry name" value="PRK12553.1"/>
    <property type="match status" value="1"/>
</dbReference>
<dbReference type="PANTHER" id="PTHR10381">
    <property type="entry name" value="ATP-DEPENDENT CLP PROTEASE PROTEOLYTIC SUBUNIT"/>
    <property type="match status" value="1"/>
</dbReference>
<dbReference type="PANTHER" id="PTHR10381:SF70">
    <property type="entry name" value="ATP-DEPENDENT CLP PROTEASE PROTEOLYTIC SUBUNIT"/>
    <property type="match status" value="1"/>
</dbReference>
<dbReference type="Pfam" id="PF00574">
    <property type="entry name" value="CLP_protease"/>
    <property type="match status" value="1"/>
</dbReference>
<dbReference type="PRINTS" id="PR00127">
    <property type="entry name" value="CLPPROTEASEP"/>
</dbReference>
<dbReference type="SUPFAM" id="SSF52096">
    <property type="entry name" value="ClpP/crotonase"/>
    <property type="match status" value="1"/>
</dbReference>
<dbReference type="PROSITE" id="PS00382">
    <property type="entry name" value="CLP_PROTEASE_HIS"/>
    <property type="match status" value="1"/>
</dbReference>
<dbReference type="PROSITE" id="PS00381">
    <property type="entry name" value="CLP_PROTEASE_SER"/>
    <property type="match status" value="1"/>
</dbReference>
<evidence type="ECO:0000255" key="1">
    <source>
        <dbReference type="HAMAP-Rule" id="MF_00444"/>
    </source>
</evidence>
<gene>
    <name evidence="1" type="primary">clpP</name>
    <name type="ordered locus">Sbal_1604</name>
</gene>
<reference key="1">
    <citation type="submission" date="2007-02" db="EMBL/GenBank/DDBJ databases">
        <title>Complete sequence of chromosome of Shewanella baltica OS155.</title>
        <authorList>
            <consortium name="US DOE Joint Genome Institute"/>
            <person name="Copeland A."/>
            <person name="Lucas S."/>
            <person name="Lapidus A."/>
            <person name="Barry K."/>
            <person name="Detter J.C."/>
            <person name="Glavina del Rio T."/>
            <person name="Hammon N."/>
            <person name="Israni S."/>
            <person name="Dalin E."/>
            <person name="Tice H."/>
            <person name="Pitluck S."/>
            <person name="Sims D.R."/>
            <person name="Brettin T."/>
            <person name="Bruce D."/>
            <person name="Han C."/>
            <person name="Tapia R."/>
            <person name="Brainard J."/>
            <person name="Schmutz J."/>
            <person name="Larimer F."/>
            <person name="Land M."/>
            <person name="Hauser L."/>
            <person name="Kyrpides N."/>
            <person name="Mikhailova N."/>
            <person name="Brettar I."/>
            <person name="Klappenbach J."/>
            <person name="Konstantinidis K."/>
            <person name="Rodrigues J."/>
            <person name="Tiedje J."/>
            <person name="Richardson P."/>
        </authorList>
    </citation>
    <scope>NUCLEOTIDE SEQUENCE [LARGE SCALE GENOMIC DNA]</scope>
    <source>
        <strain>OS155 / ATCC BAA-1091</strain>
    </source>
</reference>
<accession>A3D305</accession>
<comment type="function">
    <text evidence="1">Cleaves peptides in various proteins in a process that requires ATP hydrolysis. Has a chymotrypsin-like activity. Plays a major role in the degradation of misfolded proteins.</text>
</comment>
<comment type="catalytic activity">
    <reaction evidence="1">
        <text>Hydrolysis of proteins to small peptides in the presence of ATP and magnesium. alpha-casein is the usual test substrate. In the absence of ATP, only oligopeptides shorter than five residues are hydrolyzed (such as succinyl-Leu-Tyr-|-NHMec, and Leu-Tyr-Leu-|-Tyr-Trp, in which cleavage of the -Tyr-|-Leu- and -Tyr-|-Trp bonds also occurs).</text>
        <dbReference type="EC" id="3.4.21.92"/>
    </reaction>
</comment>
<comment type="subunit">
    <text evidence="1">Fourteen ClpP subunits assemble into 2 heptameric rings which stack back to back to give a disk-like structure with a central cavity, resembling the structure of eukaryotic proteasomes.</text>
</comment>
<comment type="subcellular location">
    <subcellularLocation>
        <location evidence="1">Cytoplasm</location>
    </subcellularLocation>
</comment>
<comment type="similarity">
    <text evidence="1">Belongs to the peptidase S14 family.</text>
</comment>
<name>CLPP_SHEB5</name>
<organism>
    <name type="scientific">Shewanella baltica (strain OS155 / ATCC BAA-1091)</name>
    <dbReference type="NCBI Taxonomy" id="325240"/>
    <lineage>
        <taxon>Bacteria</taxon>
        <taxon>Pseudomonadati</taxon>
        <taxon>Pseudomonadota</taxon>
        <taxon>Gammaproteobacteria</taxon>
        <taxon>Alteromonadales</taxon>
        <taxon>Shewanellaceae</taxon>
        <taxon>Shewanella</taxon>
    </lineage>
</organism>